<evidence type="ECO:0000255" key="1">
    <source>
        <dbReference type="HAMAP-Rule" id="MF_00105"/>
    </source>
</evidence>
<comment type="function">
    <text evidence="1">Necessary for efficient RNA polymerase transcription elongation past template-encoded arresting sites. The arresting sites in DNA have the property of trapping a certain fraction of elongating RNA polymerases that pass through, resulting in locked ternary complexes. Cleavage of the nascent transcript by cleavage factors such as GreA or GreB allows the resumption of elongation from the new 3'terminus. GreA releases sequences of 2 to 3 nucleotides.</text>
</comment>
<comment type="similarity">
    <text evidence="1">Belongs to the GreA/GreB family.</text>
</comment>
<reference key="1">
    <citation type="journal article" date="2007" name="J. Bacteriol.">
        <title>Complete genome of acute rheumatic fever-associated serotype M5 Streptococcus pyogenes strain Manfredo.</title>
        <authorList>
            <person name="Holden M.T.G."/>
            <person name="Scott A."/>
            <person name="Cherevach I."/>
            <person name="Chillingworth T."/>
            <person name="Churcher C."/>
            <person name="Cronin A."/>
            <person name="Dowd L."/>
            <person name="Feltwell T."/>
            <person name="Hamlin N."/>
            <person name="Holroyd S."/>
            <person name="Jagels K."/>
            <person name="Moule S."/>
            <person name="Mungall K."/>
            <person name="Quail M.A."/>
            <person name="Price C."/>
            <person name="Rabbinowitsch E."/>
            <person name="Sharp S."/>
            <person name="Skelton J."/>
            <person name="Whitehead S."/>
            <person name="Barrell B.G."/>
            <person name="Kehoe M."/>
            <person name="Parkhill J."/>
        </authorList>
    </citation>
    <scope>NUCLEOTIDE SEQUENCE [LARGE SCALE GENOMIC DNA]</scope>
    <source>
        <strain>Manfredo</strain>
    </source>
</reference>
<protein>
    <recommendedName>
        <fullName evidence="1">Transcription elongation factor GreA</fullName>
    </recommendedName>
    <alternativeName>
        <fullName evidence="1">Transcript cleavage factor GreA</fullName>
    </alternativeName>
</protein>
<accession>A2RGA4</accession>
<dbReference type="EMBL" id="AM295007">
    <property type="protein sequence ID" value="CAM30883.1"/>
    <property type="molecule type" value="Genomic_DNA"/>
</dbReference>
<dbReference type="RefSeq" id="WP_002990993.1">
    <property type="nucleotide sequence ID" value="NC_009332.1"/>
</dbReference>
<dbReference type="SMR" id="A2RGA4"/>
<dbReference type="GeneID" id="69901372"/>
<dbReference type="KEGG" id="spf:SpyM51562"/>
<dbReference type="HOGENOM" id="CLU_101379_2_1_9"/>
<dbReference type="GO" id="GO:0003677">
    <property type="term" value="F:DNA binding"/>
    <property type="evidence" value="ECO:0007669"/>
    <property type="project" value="UniProtKB-UniRule"/>
</dbReference>
<dbReference type="GO" id="GO:0070063">
    <property type="term" value="F:RNA polymerase binding"/>
    <property type="evidence" value="ECO:0007669"/>
    <property type="project" value="InterPro"/>
</dbReference>
<dbReference type="GO" id="GO:0006354">
    <property type="term" value="P:DNA-templated transcription elongation"/>
    <property type="evidence" value="ECO:0007669"/>
    <property type="project" value="TreeGrafter"/>
</dbReference>
<dbReference type="GO" id="GO:0032784">
    <property type="term" value="P:regulation of DNA-templated transcription elongation"/>
    <property type="evidence" value="ECO:0007669"/>
    <property type="project" value="UniProtKB-UniRule"/>
</dbReference>
<dbReference type="FunFam" id="1.10.287.180:FF:000001">
    <property type="entry name" value="Transcription elongation factor GreA"/>
    <property type="match status" value="1"/>
</dbReference>
<dbReference type="FunFam" id="3.10.50.30:FF:000001">
    <property type="entry name" value="Transcription elongation factor GreA"/>
    <property type="match status" value="1"/>
</dbReference>
<dbReference type="Gene3D" id="3.10.50.30">
    <property type="entry name" value="Transcription elongation factor, GreA/GreB, C-terminal domain"/>
    <property type="match status" value="1"/>
</dbReference>
<dbReference type="Gene3D" id="1.10.287.180">
    <property type="entry name" value="Transcription elongation factor, GreA/GreB, N-terminal domain"/>
    <property type="match status" value="1"/>
</dbReference>
<dbReference type="HAMAP" id="MF_00105">
    <property type="entry name" value="GreA_GreB"/>
    <property type="match status" value="1"/>
</dbReference>
<dbReference type="InterPro" id="IPR036953">
    <property type="entry name" value="GreA/GreB_C_sf"/>
</dbReference>
<dbReference type="InterPro" id="IPR018151">
    <property type="entry name" value="TF_GreA/GreB_CS"/>
</dbReference>
<dbReference type="InterPro" id="IPR006359">
    <property type="entry name" value="Tscrpt_elong_fac_GreA"/>
</dbReference>
<dbReference type="InterPro" id="IPR028624">
    <property type="entry name" value="Tscrpt_elong_fac_GreA/B"/>
</dbReference>
<dbReference type="InterPro" id="IPR001437">
    <property type="entry name" value="Tscrpt_elong_fac_GreA/B_C"/>
</dbReference>
<dbReference type="InterPro" id="IPR023459">
    <property type="entry name" value="Tscrpt_elong_fac_GreA/B_fam"/>
</dbReference>
<dbReference type="InterPro" id="IPR022691">
    <property type="entry name" value="Tscrpt_elong_fac_GreA/B_N"/>
</dbReference>
<dbReference type="InterPro" id="IPR036805">
    <property type="entry name" value="Tscrpt_elong_fac_GreA/B_N_sf"/>
</dbReference>
<dbReference type="NCBIfam" id="TIGR01462">
    <property type="entry name" value="greA"/>
    <property type="match status" value="1"/>
</dbReference>
<dbReference type="NCBIfam" id="NF001260">
    <property type="entry name" value="PRK00226.1-1"/>
    <property type="match status" value="1"/>
</dbReference>
<dbReference type="NCBIfam" id="NF001263">
    <property type="entry name" value="PRK00226.1-4"/>
    <property type="match status" value="1"/>
</dbReference>
<dbReference type="PANTHER" id="PTHR30437">
    <property type="entry name" value="TRANSCRIPTION ELONGATION FACTOR GREA"/>
    <property type="match status" value="1"/>
</dbReference>
<dbReference type="PANTHER" id="PTHR30437:SF4">
    <property type="entry name" value="TRANSCRIPTION ELONGATION FACTOR GREA"/>
    <property type="match status" value="1"/>
</dbReference>
<dbReference type="Pfam" id="PF01272">
    <property type="entry name" value="GreA_GreB"/>
    <property type="match status" value="1"/>
</dbReference>
<dbReference type="Pfam" id="PF03449">
    <property type="entry name" value="GreA_GreB_N"/>
    <property type="match status" value="1"/>
</dbReference>
<dbReference type="PIRSF" id="PIRSF006092">
    <property type="entry name" value="GreA_GreB"/>
    <property type="match status" value="1"/>
</dbReference>
<dbReference type="SUPFAM" id="SSF54534">
    <property type="entry name" value="FKBP-like"/>
    <property type="match status" value="1"/>
</dbReference>
<dbReference type="SUPFAM" id="SSF46557">
    <property type="entry name" value="GreA transcript cleavage protein, N-terminal domain"/>
    <property type="match status" value="1"/>
</dbReference>
<dbReference type="PROSITE" id="PS00829">
    <property type="entry name" value="GREAB_1"/>
    <property type="match status" value="1"/>
</dbReference>
<dbReference type="PROSITE" id="PS00830">
    <property type="entry name" value="GREAB_2"/>
    <property type="match status" value="1"/>
</dbReference>
<sequence length="160" mass="17653">MAEKTYPMTLTEKEQLEKELEELKLVRRPEIVERIKIARSYGDLSENSEYDAAKDEQAFVEGQISTLETKIRYAEIIDSDAVAKDEVAIGKTVIVQEVGTTDKDTYHIVGAAGADIFSGKISNESPIAQALIGKKTGDKVRIESPAATYDVEIISVEKTN</sequence>
<keyword id="KW-0175">Coiled coil</keyword>
<keyword id="KW-0238">DNA-binding</keyword>
<keyword id="KW-0804">Transcription</keyword>
<keyword id="KW-0805">Transcription regulation</keyword>
<gene>
    <name evidence="1" type="primary">greA</name>
    <name type="ordered locus">SpyM51562</name>
</gene>
<proteinExistence type="inferred from homology"/>
<name>GREA_STRPG</name>
<feature type="chain" id="PRO_1000034309" description="Transcription elongation factor GreA">
    <location>
        <begin position="1"/>
        <end position="160"/>
    </location>
</feature>
<feature type="coiled-coil region" evidence="1">
    <location>
        <begin position="1"/>
        <end position="71"/>
    </location>
</feature>
<organism>
    <name type="scientific">Streptococcus pyogenes serotype M5 (strain Manfredo)</name>
    <dbReference type="NCBI Taxonomy" id="160491"/>
    <lineage>
        <taxon>Bacteria</taxon>
        <taxon>Bacillati</taxon>
        <taxon>Bacillota</taxon>
        <taxon>Bacilli</taxon>
        <taxon>Lactobacillales</taxon>
        <taxon>Streptococcaceae</taxon>
        <taxon>Streptococcus</taxon>
    </lineage>
</organism>